<reference key="1">
    <citation type="submission" date="2005-08" db="EMBL/GenBank/DDBJ databases">
        <title>Complete sequence of Synechococcus sp. CC9902.</title>
        <authorList>
            <person name="Copeland A."/>
            <person name="Lucas S."/>
            <person name="Lapidus A."/>
            <person name="Barry K."/>
            <person name="Detter J.C."/>
            <person name="Glavina T."/>
            <person name="Hammon N."/>
            <person name="Israni S."/>
            <person name="Pitluck S."/>
            <person name="Martinez M."/>
            <person name="Schmutz J."/>
            <person name="Larimer F."/>
            <person name="Land M."/>
            <person name="Kyrpides N."/>
            <person name="Ivanova N."/>
            <person name="Richardson P."/>
        </authorList>
    </citation>
    <scope>NUCLEOTIDE SEQUENCE [LARGE SCALE GENOMIC DNA]</scope>
    <source>
        <strain>CC9902</strain>
    </source>
</reference>
<name>RPOZ_SYNS9</name>
<organism>
    <name type="scientific">Synechococcus sp. (strain CC9902)</name>
    <dbReference type="NCBI Taxonomy" id="316279"/>
    <lineage>
        <taxon>Bacteria</taxon>
        <taxon>Bacillati</taxon>
        <taxon>Cyanobacteriota</taxon>
        <taxon>Cyanophyceae</taxon>
        <taxon>Synechococcales</taxon>
        <taxon>Synechococcaceae</taxon>
        <taxon>Synechococcus</taxon>
    </lineage>
</organism>
<proteinExistence type="inferred from homology"/>
<accession>Q3AZJ0</accession>
<sequence length="82" mass="9254">MIECSWLVISAGVDSSDLAKRGESLIRQSSNRYLTTVRIAFRAKQRRFDDFDGLLEESSVKPVQRAIVELSDEQDQPDLLPG</sequence>
<protein>
    <recommendedName>
        <fullName evidence="1">DNA-directed RNA polymerase subunit omega</fullName>
        <shortName evidence="1">RNAP omega subunit</shortName>
        <ecNumber evidence="1">2.7.7.6</ecNumber>
    </recommendedName>
    <alternativeName>
        <fullName evidence="1">RNA polymerase omega subunit</fullName>
    </alternativeName>
    <alternativeName>
        <fullName evidence="1">Transcriptase subunit omega</fullName>
    </alternativeName>
</protein>
<keyword id="KW-0240">DNA-directed RNA polymerase</keyword>
<keyword id="KW-0548">Nucleotidyltransferase</keyword>
<keyword id="KW-1185">Reference proteome</keyword>
<keyword id="KW-0804">Transcription</keyword>
<keyword id="KW-0808">Transferase</keyword>
<gene>
    <name evidence="1" type="primary">rpoZ</name>
    <name type="ordered locus">Syncc9902_0519</name>
</gene>
<evidence type="ECO:0000255" key="1">
    <source>
        <dbReference type="HAMAP-Rule" id="MF_00366"/>
    </source>
</evidence>
<comment type="function">
    <text evidence="1">Promotes RNA polymerase assembly. Latches the N- and C-terminal regions of the beta' subunit thereby facilitating its interaction with the beta and alpha subunits.</text>
</comment>
<comment type="catalytic activity">
    <reaction evidence="1">
        <text>RNA(n) + a ribonucleoside 5'-triphosphate = RNA(n+1) + diphosphate</text>
        <dbReference type="Rhea" id="RHEA:21248"/>
        <dbReference type="Rhea" id="RHEA-COMP:14527"/>
        <dbReference type="Rhea" id="RHEA-COMP:17342"/>
        <dbReference type="ChEBI" id="CHEBI:33019"/>
        <dbReference type="ChEBI" id="CHEBI:61557"/>
        <dbReference type="ChEBI" id="CHEBI:140395"/>
        <dbReference type="EC" id="2.7.7.6"/>
    </reaction>
</comment>
<comment type="subunit">
    <text evidence="1">In cyanobacteria the RNAP catalytic core is composed of 2 alpha, 1 beta, 1 beta', 1 gamma and 1 omega subunit. When a sigma factor is associated with the core the holoenzyme is formed, which can initiate transcription.</text>
</comment>
<comment type="similarity">
    <text evidence="1">Belongs to the RNA polymerase subunit omega family.</text>
</comment>
<feature type="chain" id="PRO_0000237517" description="DNA-directed RNA polymerase subunit omega">
    <location>
        <begin position="1"/>
        <end position="82"/>
    </location>
</feature>
<dbReference type="EC" id="2.7.7.6" evidence="1"/>
<dbReference type="EMBL" id="CP000097">
    <property type="protein sequence ID" value="ABB25487.1"/>
    <property type="molecule type" value="Genomic_DNA"/>
</dbReference>
<dbReference type="SMR" id="Q3AZJ0"/>
<dbReference type="STRING" id="316279.Syncc9902_0519"/>
<dbReference type="KEGG" id="sye:Syncc9902_0519"/>
<dbReference type="eggNOG" id="ENOG5032RMS">
    <property type="taxonomic scope" value="Bacteria"/>
</dbReference>
<dbReference type="HOGENOM" id="CLU_175526_0_0_3"/>
<dbReference type="Proteomes" id="UP000002712">
    <property type="component" value="Chromosome"/>
</dbReference>
<dbReference type="GO" id="GO:0000428">
    <property type="term" value="C:DNA-directed RNA polymerase complex"/>
    <property type="evidence" value="ECO:0007669"/>
    <property type="project" value="UniProtKB-KW"/>
</dbReference>
<dbReference type="GO" id="GO:0003677">
    <property type="term" value="F:DNA binding"/>
    <property type="evidence" value="ECO:0007669"/>
    <property type="project" value="UniProtKB-UniRule"/>
</dbReference>
<dbReference type="GO" id="GO:0003899">
    <property type="term" value="F:DNA-directed RNA polymerase activity"/>
    <property type="evidence" value="ECO:0007669"/>
    <property type="project" value="UniProtKB-UniRule"/>
</dbReference>
<dbReference type="GO" id="GO:0006351">
    <property type="term" value="P:DNA-templated transcription"/>
    <property type="evidence" value="ECO:0007669"/>
    <property type="project" value="UniProtKB-UniRule"/>
</dbReference>
<dbReference type="HAMAP" id="MF_00366">
    <property type="entry name" value="RNApol_bact_RpoZ"/>
    <property type="match status" value="1"/>
</dbReference>
<dbReference type="InterPro" id="IPR003716">
    <property type="entry name" value="DNA-dir_RNA_pol_omega"/>
</dbReference>
<dbReference type="InterPro" id="IPR006110">
    <property type="entry name" value="Pol_omega/Rpo6/RPB6"/>
</dbReference>
<dbReference type="NCBIfam" id="NF001574">
    <property type="entry name" value="PRK00392.2-5"/>
    <property type="match status" value="1"/>
</dbReference>
<dbReference type="Pfam" id="PF01192">
    <property type="entry name" value="RNA_pol_Rpb6"/>
    <property type="match status" value="1"/>
</dbReference>